<organism>
    <name type="scientific">Wolbachia pipientis subsp. Culex pipiens (strain wPip)</name>
    <dbReference type="NCBI Taxonomy" id="570417"/>
    <lineage>
        <taxon>Bacteria</taxon>
        <taxon>Pseudomonadati</taxon>
        <taxon>Pseudomonadota</taxon>
        <taxon>Alphaproteobacteria</taxon>
        <taxon>Rickettsiales</taxon>
        <taxon>Anaplasmataceae</taxon>
        <taxon>Wolbachieae</taxon>
        <taxon>Wolbachia</taxon>
    </lineage>
</organism>
<reference key="1">
    <citation type="journal article" date="2008" name="Mol. Biol. Evol.">
        <title>Genome evolution of Wolbachia strain wPip from the Culex pipiens group.</title>
        <authorList>
            <person name="Klasson L."/>
            <person name="Walker T."/>
            <person name="Sebaihia M."/>
            <person name="Sanders M.J."/>
            <person name="Quail M.A."/>
            <person name="Lord A."/>
            <person name="Sanders S."/>
            <person name="Earl J."/>
            <person name="O'Neill S.L."/>
            <person name="Thomson N."/>
            <person name="Sinkins S.P."/>
            <person name="Parkhill J."/>
        </authorList>
    </citation>
    <scope>NUCLEOTIDE SEQUENCE [LARGE SCALE GENOMIC DNA]</scope>
    <source>
        <strain>wPip</strain>
    </source>
</reference>
<accession>B3CN40</accession>
<name>RS8_WOLPP</name>
<gene>
    <name evidence="1" type="primary">rpsH</name>
    <name type="ordered locus">WP1180</name>
</gene>
<dbReference type="EMBL" id="AM999887">
    <property type="protein sequence ID" value="CAQ55288.1"/>
    <property type="molecule type" value="Genomic_DNA"/>
</dbReference>
<dbReference type="RefSeq" id="WP_007302546.1">
    <property type="nucleotide sequence ID" value="NC_010981.1"/>
</dbReference>
<dbReference type="SMR" id="B3CN40"/>
<dbReference type="KEGG" id="wpi:WP1180"/>
<dbReference type="eggNOG" id="COG0096">
    <property type="taxonomic scope" value="Bacteria"/>
</dbReference>
<dbReference type="HOGENOM" id="CLU_098428_0_0_5"/>
<dbReference type="Proteomes" id="UP000008814">
    <property type="component" value="Chromosome"/>
</dbReference>
<dbReference type="GO" id="GO:1990904">
    <property type="term" value="C:ribonucleoprotein complex"/>
    <property type="evidence" value="ECO:0007669"/>
    <property type="project" value="UniProtKB-KW"/>
</dbReference>
<dbReference type="GO" id="GO:0005840">
    <property type="term" value="C:ribosome"/>
    <property type="evidence" value="ECO:0007669"/>
    <property type="project" value="UniProtKB-KW"/>
</dbReference>
<dbReference type="GO" id="GO:0019843">
    <property type="term" value="F:rRNA binding"/>
    <property type="evidence" value="ECO:0007669"/>
    <property type="project" value="UniProtKB-UniRule"/>
</dbReference>
<dbReference type="GO" id="GO:0003735">
    <property type="term" value="F:structural constituent of ribosome"/>
    <property type="evidence" value="ECO:0007669"/>
    <property type="project" value="InterPro"/>
</dbReference>
<dbReference type="GO" id="GO:0006412">
    <property type="term" value="P:translation"/>
    <property type="evidence" value="ECO:0007669"/>
    <property type="project" value="UniProtKB-UniRule"/>
</dbReference>
<dbReference type="FunFam" id="3.30.1370.30:FF:000002">
    <property type="entry name" value="30S ribosomal protein S8"/>
    <property type="match status" value="1"/>
</dbReference>
<dbReference type="FunFam" id="3.30.1490.10:FF:000001">
    <property type="entry name" value="30S ribosomal protein S8"/>
    <property type="match status" value="1"/>
</dbReference>
<dbReference type="Gene3D" id="3.30.1370.30">
    <property type="match status" value="1"/>
</dbReference>
<dbReference type="Gene3D" id="3.30.1490.10">
    <property type="match status" value="1"/>
</dbReference>
<dbReference type="HAMAP" id="MF_01302_B">
    <property type="entry name" value="Ribosomal_uS8_B"/>
    <property type="match status" value="1"/>
</dbReference>
<dbReference type="InterPro" id="IPR000630">
    <property type="entry name" value="Ribosomal_uS8"/>
</dbReference>
<dbReference type="InterPro" id="IPR047863">
    <property type="entry name" value="Ribosomal_uS8_CS"/>
</dbReference>
<dbReference type="InterPro" id="IPR035987">
    <property type="entry name" value="Ribosomal_uS8_sf"/>
</dbReference>
<dbReference type="NCBIfam" id="NF001109">
    <property type="entry name" value="PRK00136.1"/>
    <property type="match status" value="1"/>
</dbReference>
<dbReference type="PANTHER" id="PTHR11758">
    <property type="entry name" value="40S RIBOSOMAL PROTEIN S15A"/>
    <property type="match status" value="1"/>
</dbReference>
<dbReference type="Pfam" id="PF00410">
    <property type="entry name" value="Ribosomal_S8"/>
    <property type="match status" value="1"/>
</dbReference>
<dbReference type="SUPFAM" id="SSF56047">
    <property type="entry name" value="Ribosomal protein S8"/>
    <property type="match status" value="1"/>
</dbReference>
<dbReference type="PROSITE" id="PS00053">
    <property type="entry name" value="RIBOSOMAL_S8"/>
    <property type="match status" value="1"/>
</dbReference>
<proteinExistence type="inferred from homology"/>
<sequence length="131" mass="14846">MSLSDGIGDFLTRIRNAQLAMHRETRVLFSKVNSSILKILKEEGYILNYEKQESDSIPSLVVQLKYYDKSPVINDIARVSKPGCRYYSKCKDISKAYNGLGIFIISTPKGVMTDYNARRLKVGGEVLCRVF</sequence>
<keyword id="KW-0687">Ribonucleoprotein</keyword>
<keyword id="KW-0689">Ribosomal protein</keyword>
<keyword id="KW-0694">RNA-binding</keyword>
<keyword id="KW-0699">rRNA-binding</keyword>
<comment type="function">
    <text evidence="1">One of the primary rRNA binding proteins, it binds directly to 16S rRNA central domain where it helps coordinate assembly of the platform of the 30S subunit.</text>
</comment>
<comment type="subunit">
    <text evidence="1">Part of the 30S ribosomal subunit. Contacts proteins S5 and S12.</text>
</comment>
<comment type="similarity">
    <text evidence="1">Belongs to the universal ribosomal protein uS8 family.</text>
</comment>
<feature type="chain" id="PRO_1000140636" description="Small ribosomal subunit protein uS8">
    <location>
        <begin position="1"/>
        <end position="131"/>
    </location>
</feature>
<protein>
    <recommendedName>
        <fullName evidence="1">Small ribosomal subunit protein uS8</fullName>
    </recommendedName>
    <alternativeName>
        <fullName evidence="2">30S ribosomal protein S8</fullName>
    </alternativeName>
</protein>
<evidence type="ECO:0000255" key="1">
    <source>
        <dbReference type="HAMAP-Rule" id="MF_01302"/>
    </source>
</evidence>
<evidence type="ECO:0000305" key="2"/>